<feature type="chain" id="PRO_0000072832" description="Glycine--tRNA ligase alpha subunit">
    <location>
        <begin position="1"/>
        <end position="300"/>
    </location>
</feature>
<dbReference type="EC" id="6.1.1.14"/>
<dbReference type="EMBL" id="AE016826">
    <property type="protein sequence ID" value="AAO26861.1"/>
    <property type="molecule type" value="Genomic_DNA"/>
</dbReference>
<dbReference type="RefSeq" id="WP_011091262.1">
    <property type="nucleotide sequence ID" value="NC_004545.1"/>
</dbReference>
<dbReference type="SMR" id="Q89AV6"/>
<dbReference type="STRING" id="224915.bbp_127"/>
<dbReference type="KEGG" id="bab:bbp_127"/>
<dbReference type="eggNOG" id="COG0752">
    <property type="taxonomic scope" value="Bacteria"/>
</dbReference>
<dbReference type="HOGENOM" id="CLU_057066_1_0_6"/>
<dbReference type="OrthoDB" id="9802183at2"/>
<dbReference type="Proteomes" id="UP000000601">
    <property type="component" value="Chromosome"/>
</dbReference>
<dbReference type="GO" id="GO:0005829">
    <property type="term" value="C:cytosol"/>
    <property type="evidence" value="ECO:0007669"/>
    <property type="project" value="TreeGrafter"/>
</dbReference>
<dbReference type="GO" id="GO:0005524">
    <property type="term" value="F:ATP binding"/>
    <property type="evidence" value="ECO:0007669"/>
    <property type="project" value="UniProtKB-UniRule"/>
</dbReference>
<dbReference type="GO" id="GO:0004820">
    <property type="term" value="F:glycine-tRNA ligase activity"/>
    <property type="evidence" value="ECO:0007669"/>
    <property type="project" value="UniProtKB-UniRule"/>
</dbReference>
<dbReference type="GO" id="GO:0006426">
    <property type="term" value="P:glycyl-tRNA aminoacylation"/>
    <property type="evidence" value="ECO:0007669"/>
    <property type="project" value="UniProtKB-UniRule"/>
</dbReference>
<dbReference type="CDD" id="cd00733">
    <property type="entry name" value="GlyRS_alpha_core"/>
    <property type="match status" value="1"/>
</dbReference>
<dbReference type="FunFam" id="3.30.930.10:FF:000006">
    <property type="entry name" value="Glycine--tRNA ligase alpha subunit"/>
    <property type="match status" value="1"/>
</dbReference>
<dbReference type="Gene3D" id="3.30.930.10">
    <property type="entry name" value="Bira Bifunctional Protein, Domain 2"/>
    <property type="match status" value="1"/>
</dbReference>
<dbReference type="Gene3D" id="1.20.58.180">
    <property type="entry name" value="Class II aaRS and biotin synthetases, domain 2"/>
    <property type="match status" value="1"/>
</dbReference>
<dbReference type="HAMAP" id="MF_00254">
    <property type="entry name" value="Gly_tRNA_synth_alpha"/>
    <property type="match status" value="1"/>
</dbReference>
<dbReference type="InterPro" id="IPR045864">
    <property type="entry name" value="aa-tRNA-synth_II/BPL/LPL"/>
</dbReference>
<dbReference type="InterPro" id="IPR006194">
    <property type="entry name" value="Gly-tRNA-synth_heterodimer"/>
</dbReference>
<dbReference type="InterPro" id="IPR002310">
    <property type="entry name" value="Gly-tRNA_ligase_asu"/>
</dbReference>
<dbReference type="NCBIfam" id="TIGR00388">
    <property type="entry name" value="glyQ"/>
    <property type="match status" value="1"/>
</dbReference>
<dbReference type="NCBIfam" id="NF006827">
    <property type="entry name" value="PRK09348.1"/>
    <property type="match status" value="1"/>
</dbReference>
<dbReference type="PANTHER" id="PTHR30075:SF2">
    <property type="entry name" value="GLYCINE--TRNA LIGASE, CHLOROPLASTIC_MITOCHONDRIAL 2"/>
    <property type="match status" value="1"/>
</dbReference>
<dbReference type="PANTHER" id="PTHR30075">
    <property type="entry name" value="GLYCYL-TRNA SYNTHETASE"/>
    <property type="match status" value="1"/>
</dbReference>
<dbReference type="Pfam" id="PF02091">
    <property type="entry name" value="tRNA-synt_2e"/>
    <property type="match status" value="1"/>
</dbReference>
<dbReference type="PRINTS" id="PR01044">
    <property type="entry name" value="TRNASYNTHGA"/>
</dbReference>
<dbReference type="SUPFAM" id="SSF55681">
    <property type="entry name" value="Class II aaRS and biotin synthetases"/>
    <property type="match status" value="1"/>
</dbReference>
<dbReference type="PROSITE" id="PS50861">
    <property type="entry name" value="AA_TRNA_LIGASE_II_GLYAB"/>
    <property type="match status" value="1"/>
</dbReference>
<comment type="catalytic activity">
    <reaction>
        <text>tRNA(Gly) + glycine + ATP = glycyl-tRNA(Gly) + AMP + diphosphate</text>
        <dbReference type="Rhea" id="RHEA:16013"/>
        <dbReference type="Rhea" id="RHEA-COMP:9664"/>
        <dbReference type="Rhea" id="RHEA-COMP:9683"/>
        <dbReference type="ChEBI" id="CHEBI:30616"/>
        <dbReference type="ChEBI" id="CHEBI:33019"/>
        <dbReference type="ChEBI" id="CHEBI:57305"/>
        <dbReference type="ChEBI" id="CHEBI:78442"/>
        <dbReference type="ChEBI" id="CHEBI:78522"/>
        <dbReference type="ChEBI" id="CHEBI:456215"/>
        <dbReference type="EC" id="6.1.1.14"/>
    </reaction>
</comment>
<comment type="subunit">
    <text evidence="1">Tetramer of two alpha and two beta subunits.</text>
</comment>
<comment type="subcellular location">
    <subcellularLocation>
        <location evidence="1">Cytoplasm</location>
    </subcellularLocation>
</comment>
<comment type="similarity">
    <text evidence="2">Belongs to the class-II aminoacyl-tRNA synthetase family.</text>
</comment>
<name>SYGA_BUCBP</name>
<proteinExistence type="inferred from homology"/>
<keyword id="KW-0030">Aminoacyl-tRNA synthetase</keyword>
<keyword id="KW-0067">ATP-binding</keyword>
<keyword id="KW-0963">Cytoplasm</keyword>
<keyword id="KW-0436">Ligase</keyword>
<keyword id="KW-0547">Nucleotide-binding</keyword>
<keyword id="KW-0648">Protein biosynthesis</keyword>
<keyword id="KW-1185">Reference proteome</keyword>
<sequence>MLSNFKKEKMNTSTTFYEIICTLEKYWHNQNCTIIEPLDISVGAGTFHNKTFFGTIGSKPISMAYVQSSRRPSDGRYGKNPNRLQHYYQFQVIIKPSPHNIQCLYLNSLKKLNIDCKTNDIRFVEDNWENPTLGAWGQGWEVWLNGMEVTQFTYFQQVGGINCNPITTEITYGLERIAMHIQNKSNIYDVIWNQDMNNNIITYGDLFLNNEIEHSSYNFKYADSKLHFDLFEKHLQESNRIMKLFNNLLFPAYEHLIYSIHYFNLLDAKKKFSTTQRQTHILNIRNTSKMIATNYYKKQK</sequence>
<accession>Q89AV6</accession>
<reference key="1">
    <citation type="journal article" date="2003" name="Proc. Natl. Acad. Sci. U.S.A.">
        <title>Reductive genome evolution in Buchnera aphidicola.</title>
        <authorList>
            <person name="van Ham R.C.H.J."/>
            <person name="Kamerbeek J."/>
            <person name="Palacios C."/>
            <person name="Rausell C."/>
            <person name="Abascal F."/>
            <person name="Bastolla U."/>
            <person name="Fernandez J.M."/>
            <person name="Jimenez L."/>
            <person name="Postigo M."/>
            <person name="Silva F.J."/>
            <person name="Tamames J."/>
            <person name="Viguera E."/>
            <person name="Latorre A."/>
            <person name="Valencia A."/>
            <person name="Moran F."/>
            <person name="Moya A."/>
        </authorList>
    </citation>
    <scope>NUCLEOTIDE SEQUENCE [LARGE SCALE GENOMIC DNA]</scope>
    <source>
        <strain>Bp</strain>
    </source>
</reference>
<evidence type="ECO:0000250" key="1"/>
<evidence type="ECO:0000305" key="2"/>
<protein>
    <recommendedName>
        <fullName>Glycine--tRNA ligase alpha subunit</fullName>
        <ecNumber>6.1.1.14</ecNumber>
    </recommendedName>
    <alternativeName>
        <fullName>Glycyl-tRNA synthetase alpha subunit</fullName>
        <shortName>GlyRS</shortName>
    </alternativeName>
</protein>
<organism>
    <name type="scientific">Buchnera aphidicola subsp. Baizongia pistaciae (strain Bp)</name>
    <dbReference type="NCBI Taxonomy" id="224915"/>
    <lineage>
        <taxon>Bacteria</taxon>
        <taxon>Pseudomonadati</taxon>
        <taxon>Pseudomonadota</taxon>
        <taxon>Gammaproteobacteria</taxon>
        <taxon>Enterobacterales</taxon>
        <taxon>Erwiniaceae</taxon>
        <taxon>Buchnera</taxon>
    </lineage>
</organism>
<gene>
    <name type="primary">glyQ</name>
    <name type="ordered locus">bbp_127</name>
</gene>